<evidence type="ECO:0000255" key="1">
    <source>
        <dbReference type="HAMAP-Rule" id="MF_00059"/>
    </source>
</evidence>
<keyword id="KW-0240">DNA-directed RNA polymerase</keyword>
<keyword id="KW-0548">Nucleotidyltransferase</keyword>
<keyword id="KW-0804">Transcription</keyword>
<keyword id="KW-0808">Transferase</keyword>
<dbReference type="EC" id="2.7.7.6" evidence="1"/>
<dbReference type="EMBL" id="CP000485">
    <property type="protein sequence ID" value="ABK83549.1"/>
    <property type="molecule type" value="Genomic_DNA"/>
</dbReference>
<dbReference type="RefSeq" id="WP_000569643.1">
    <property type="nucleotide sequence ID" value="NC_008600.1"/>
</dbReference>
<dbReference type="SMR" id="A0R8K6"/>
<dbReference type="KEGG" id="btl:BALH_0134"/>
<dbReference type="HOGENOM" id="CLU_053084_0_1_9"/>
<dbReference type="GO" id="GO:0005737">
    <property type="term" value="C:cytoplasm"/>
    <property type="evidence" value="ECO:0007669"/>
    <property type="project" value="UniProtKB-ARBA"/>
</dbReference>
<dbReference type="GO" id="GO:0000428">
    <property type="term" value="C:DNA-directed RNA polymerase complex"/>
    <property type="evidence" value="ECO:0007669"/>
    <property type="project" value="UniProtKB-KW"/>
</dbReference>
<dbReference type="GO" id="GO:0003677">
    <property type="term" value="F:DNA binding"/>
    <property type="evidence" value="ECO:0007669"/>
    <property type="project" value="UniProtKB-UniRule"/>
</dbReference>
<dbReference type="GO" id="GO:0003899">
    <property type="term" value="F:DNA-directed RNA polymerase activity"/>
    <property type="evidence" value="ECO:0007669"/>
    <property type="project" value="UniProtKB-UniRule"/>
</dbReference>
<dbReference type="GO" id="GO:0046983">
    <property type="term" value="F:protein dimerization activity"/>
    <property type="evidence" value="ECO:0007669"/>
    <property type="project" value="InterPro"/>
</dbReference>
<dbReference type="GO" id="GO:0006351">
    <property type="term" value="P:DNA-templated transcription"/>
    <property type="evidence" value="ECO:0007669"/>
    <property type="project" value="UniProtKB-UniRule"/>
</dbReference>
<dbReference type="CDD" id="cd06928">
    <property type="entry name" value="RNAP_alpha_NTD"/>
    <property type="match status" value="1"/>
</dbReference>
<dbReference type="FunFam" id="1.10.150.20:FF:000001">
    <property type="entry name" value="DNA-directed RNA polymerase subunit alpha"/>
    <property type="match status" value="1"/>
</dbReference>
<dbReference type="FunFam" id="2.170.120.12:FF:000001">
    <property type="entry name" value="DNA-directed RNA polymerase subunit alpha"/>
    <property type="match status" value="1"/>
</dbReference>
<dbReference type="Gene3D" id="1.10.150.20">
    <property type="entry name" value="5' to 3' exonuclease, C-terminal subdomain"/>
    <property type="match status" value="1"/>
</dbReference>
<dbReference type="Gene3D" id="2.170.120.12">
    <property type="entry name" value="DNA-directed RNA polymerase, insert domain"/>
    <property type="match status" value="1"/>
</dbReference>
<dbReference type="Gene3D" id="3.30.1360.10">
    <property type="entry name" value="RNA polymerase, RBP11-like subunit"/>
    <property type="match status" value="1"/>
</dbReference>
<dbReference type="HAMAP" id="MF_00059">
    <property type="entry name" value="RNApol_bact_RpoA"/>
    <property type="match status" value="1"/>
</dbReference>
<dbReference type="InterPro" id="IPR011262">
    <property type="entry name" value="DNA-dir_RNA_pol_insert"/>
</dbReference>
<dbReference type="InterPro" id="IPR011263">
    <property type="entry name" value="DNA-dir_RNA_pol_RpoA/D/Rpb3"/>
</dbReference>
<dbReference type="InterPro" id="IPR011773">
    <property type="entry name" value="DNA-dir_RpoA"/>
</dbReference>
<dbReference type="InterPro" id="IPR036603">
    <property type="entry name" value="RBP11-like"/>
</dbReference>
<dbReference type="InterPro" id="IPR011260">
    <property type="entry name" value="RNAP_asu_C"/>
</dbReference>
<dbReference type="InterPro" id="IPR036643">
    <property type="entry name" value="RNApol_insert_sf"/>
</dbReference>
<dbReference type="NCBIfam" id="NF003513">
    <property type="entry name" value="PRK05182.1-2"/>
    <property type="match status" value="1"/>
</dbReference>
<dbReference type="NCBIfam" id="NF003515">
    <property type="entry name" value="PRK05182.2-1"/>
    <property type="match status" value="1"/>
</dbReference>
<dbReference type="NCBIfam" id="NF003516">
    <property type="entry name" value="PRK05182.2-2"/>
    <property type="match status" value="1"/>
</dbReference>
<dbReference type="NCBIfam" id="NF003519">
    <property type="entry name" value="PRK05182.2-5"/>
    <property type="match status" value="1"/>
</dbReference>
<dbReference type="NCBIfam" id="TIGR02027">
    <property type="entry name" value="rpoA"/>
    <property type="match status" value="1"/>
</dbReference>
<dbReference type="Pfam" id="PF01000">
    <property type="entry name" value="RNA_pol_A_bac"/>
    <property type="match status" value="1"/>
</dbReference>
<dbReference type="Pfam" id="PF03118">
    <property type="entry name" value="RNA_pol_A_CTD"/>
    <property type="match status" value="1"/>
</dbReference>
<dbReference type="Pfam" id="PF01193">
    <property type="entry name" value="RNA_pol_L"/>
    <property type="match status" value="1"/>
</dbReference>
<dbReference type="SMART" id="SM00662">
    <property type="entry name" value="RPOLD"/>
    <property type="match status" value="1"/>
</dbReference>
<dbReference type="SUPFAM" id="SSF47789">
    <property type="entry name" value="C-terminal domain of RNA polymerase alpha subunit"/>
    <property type="match status" value="1"/>
</dbReference>
<dbReference type="SUPFAM" id="SSF56553">
    <property type="entry name" value="Insert subdomain of RNA polymerase alpha subunit"/>
    <property type="match status" value="1"/>
</dbReference>
<dbReference type="SUPFAM" id="SSF55257">
    <property type="entry name" value="RBP11-like subunits of RNA polymerase"/>
    <property type="match status" value="1"/>
</dbReference>
<comment type="function">
    <text evidence="1">DNA-dependent RNA polymerase catalyzes the transcription of DNA into RNA using the four ribonucleoside triphosphates as substrates.</text>
</comment>
<comment type="catalytic activity">
    <reaction evidence="1">
        <text>RNA(n) + a ribonucleoside 5'-triphosphate = RNA(n+1) + diphosphate</text>
        <dbReference type="Rhea" id="RHEA:21248"/>
        <dbReference type="Rhea" id="RHEA-COMP:14527"/>
        <dbReference type="Rhea" id="RHEA-COMP:17342"/>
        <dbReference type="ChEBI" id="CHEBI:33019"/>
        <dbReference type="ChEBI" id="CHEBI:61557"/>
        <dbReference type="ChEBI" id="CHEBI:140395"/>
        <dbReference type="EC" id="2.7.7.6"/>
    </reaction>
</comment>
<comment type="subunit">
    <text evidence="1">Homodimer. The RNAP catalytic core consists of 2 alpha, 1 beta, 1 beta' and 1 omega subunit. When a sigma factor is associated with the core the holoenzyme is formed, which can initiate transcription.</text>
</comment>
<comment type="domain">
    <text evidence="1">The N-terminal domain is essential for RNAP assembly and basal transcription, whereas the C-terminal domain is involved in interaction with transcriptional regulators and with upstream promoter elements.</text>
</comment>
<comment type="similarity">
    <text evidence="1">Belongs to the RNA polymerase alpha chain family.</text>
</comment>
<proteinExistence type="inferred from homology"/>
<accession>A0R8K6</accession>
<name>RPOA_BACAH</name>
<gene>
    <name evidence="1" type="primary">rpoA</name>
    <name type="ordered locus">BALH_0134</name>
</gene>
<reference key="1">
    <citation type="journal article" date="2007" name="J. Bacteriol.">
        <title>The complete genome sequence of Bacillus thuringiensis Al Hakam.</title>
        <authorList>
            <person name="Challacombe J.F."/>
            <person name="Altherr M.R."/>
            <person name="Xie G."/>
            <person name="Bhotika S.S."/>
            <person name="Brown N."/>
            <person name="Bruce D."/>
            <person name="Campbell C.S."/>
            <person name="Campbell M.L."/>
            <person name="Chen J."/>
            <person name="Chertkov O."/>
            <person name="Cleland C."/>
            <person name="Dimitrijevic M."/>
            <person name="Doggett N.A."/>
            <person name="Fawcett J.J."/>
            <person name="Glavina T."/>
            <person name="Goodwin L.A."/>
            <person name="Green L.D."/>
            <person name="Han C.S."/>
            <person name="Hill K.K."/>
            <person name="Hitchcock P."/>
            <person name="Jackson P.J."/>
            <person name="Keim P."/>
            <person name="Kewalramani A.R."/>
            <person name="Longmire J."/>
            <person name="Lucas S."/>
            <person name="Malfatti S."/>
            <person name="Martinez D."/>
            <person name="McMurry K."/>
            <person name="Meincke L.J."/>
            <person name="Misra M."/>
            <person name="Moseman B.L."/>
            <person name="Mundt M."/>
            <person name="Munk A.C."/>
            <person name="Okinaka R.T."/>
            <person name="Parson-Quintana B."/>
            <person name="Reilly L.P."/>
            <person name="Richardson P."/>
            <person name="Robinson D.L."/>
            <person name="Saunders E."/>
            <person name="Tapia R."/>
            <person name="Tesmer J.G."/>
            <person name="Thayer N."/>
            <person name="Thompson L.S."/>
            <person name="Tice H."/>
            <person name="Ticknor L.O."/>
            <person name="Wills P.L."/>
            <person name="Gilna P."/>
            <person name="Brettin T.S."/>
        </authorList>
    </citation>
    <scope>NUCLEOTIDE SEQUENCE [LARGE SCALE GENOMIC DNA]</scope>
    <source>
        <strain>Al Hakam</strain>
    </source>
</reference>
<organism>
    <name type="scientific">Bacillus thuringiensis (strain Al Hakam)</name>
    <dbReference type="NCBI Taxonomy" id="412694"/>
    <lineage>
        <taxon>Bacteria</taxon>
        <taxon>Bacillati</taxon>
        <taxon>Bacillota</taxon>
        <taxon>Bacilli</taxon>
        <taxon>Bacillales</taxon>
        <taxon>Bacillaceae</taxon>
        <taxon>Bacillus</taxon>
        <taxon>Bacillus cereus group</taxon>
    </lineage>
</organism>
<sequence length="314" mass="34936">MIEIEKPKIETVELNEDAKYGKFVIEPLERGYGTTLGNSLRRILLSSLPGAAVTAIQIDGVLHEFSTVEGVVEDVTTIILNLKKLALKIYSEEEKTLEIDVQGEGIVTAADITHDSDVEILNPDLHIATLAKDAHFRVRLTAKRGRGYTPADANKSEDQPIGVIPIDSIYTPVSRVTYQVEKTRVGQVANYDKLTLDVWTDGSIGPKEAISLGAKILTEHLNIFVGLTDEAQNAEIMVEKEEDQKEKVLEMTIEELDLSVRSYNCLKRAGINTVQELANKTEEDMMKVRNLGRKSLEEVKHKLEELGLGLRKDD</sequence>
<feature type="chain" id="PRO_0000296782" description="DNA-directed RNA polymerase subunit alpha">
    <location>
        <begin position="1"/>
        <end position="314"/>
    </location>
</feature>
<feature type="region of interest" description="Alpha N-terminal domain (alpha-NTD)" evidence="1">
    <location>
        <begin position="1"/>
        <end position="228"/>
    </location>
</feature>
<feature type="region of interest" description="Alpha C-terminal domain (alpha-CTD)" evidence="1">
    <location>
        <begin position="245"/>
        <end position="314"/>
    </location>
</feature>
<protein>
    <recommendedName>
        <fullName evidence="1">DNA-directed RNA polymerase subunit alpha</fullName>
        <shortName evidence="1">RNAP subunit alpha</shortName>
        <ecNumber evidence="1">2.7.7.6</ecNumber>
    </recommendedName>
    <alternativeName>
        <fullName evidence="1">RNA polymerase subunit alpha</fullName>
    </alternativeName>
    <alternativeName>
        <fullName evidence="1">Transcriptase subunit alpha</fullName>
    </alternativeName>
</protein>